<keyword id="KW-0106">Calcium</keyword>
<keyword id="KW-0903">Direct protein sequencing</keyword>
<keyword id="KW-1015">Disulfide bond</keyword>
<keyword id="KW-1199">Hemostasis impairing toxin</keyword>
<keyword id="KW-0378">Hydrolase</keyword>
<keyword id="KW-0479">Metal-binding</keyword>
<keyword id="KW-0482">Metalloprotease</keyword>
<keyword id="KW-0645">Protease</keyword>
<keyword id="KW-0964">Secreted</keyword>
<keyword id="KW-0800">Toxin</keyword>
<keyword id="KW-0862">Zinc</keyword>
<dbReference type="EC" id="3.4.24.-"/>
<dbReference type="PIR" id="A34858">
    <property type="entry name" value="A34858"/>
</dbReference>
<dbReference type="GO" id="GO:0005576">
    <property type="term" value="C:extracellular region"/>
    <property type="evidence" value="ECO:0007669"/>
    <property type="project" value="UniProtKB-SubCell"/>
</dbReference>
<dbReference type="GO" id="GO:0046872">
    <property type="term" value="F:metal ion binding"/>
    <property type="evidence" value="ECO:0007669"/>
    <property type="project" value="UniProtKB-KW"/>
</dbReference>
<dbReference type="GO" id="GO:0008237">
    <property type="term" value="F:metallopeptidase activity"/>
    <property type="evidence" value="ECO:0007669"/>
    <property type="project" value="UniProtKB-KW"/>
</dbReference>
<dbReference type="GO" id="GO:0090729">
    <property type="term" value="F:toxin activity"/>
    <property type="evidence" value="ECO:0007669"/>
    <property type="project" value="UniProtKB-KW"/>
</dbReference>
<dbReference type="GO" id="GO:0006508">
    <property type="term" value="P:proteolysis"/>
    <property type="evidence" value="ECO:0007669"/>
    <property type="project" value="UniProtKB-KW"/>
</dbReference>
<accession>Q7LZJ1</accession>
<evidence type="ECO:0000250" key="1"/>
<evidence type="ECO:0000255" key="2">
    <source>
        <dbReference type="PROSITE-ProRule" id="PRU00276"/>
    </source>
</evidence>
<evidence type="ECO:0000305" key="3"/>
<comment type="function">
    <text evidence="1">Snake venom metalloproteinase that impairs hemostasis in the envenomed animal.</text>
</comment>
<comment type="cofactor">
    <cofactor evidence="1">
        <name>Zn(2+)</name>
        <dbReference type="ChEBI" id="CHEBI:29105"/>
    </cofactor>
    <text evidence="1">Binds 1 zinc ion per subunit.</text>
</comment>
<comment type="subunit">
    <text evidence="1">Monomer.</text>
</comment>
<comment type="subcellular location">
    <subcellularLocation>
        <location evidence="1">Secreted</location>
    </subcellularLocation>
</comment>
<comment type="tissue specificity">
    <text>Expressed by the venom gland.</text>
</comment>
<comment type="PTM">
    <text evidence="1">Contains 3 disulfide bonds.</text>
</comment>
<comment type="miscellaneous">
    <text>The molecular weight was determined to be 21,390 Da.</text>
</comment>
<comment type="similarity">
    <text evidence="3">Belongs to the venom metalloproteinase (M12B) family. P-I subfamily.</text>
</comment>
<sequence>FAKRYVELVIVA</sequence>
<protein>
    <recommendedName>
        <fullName>Snake venom metalloproteinase</fullName>
        <shortName>SVMP</shortName>
        <ecNumber>3.4.24.-</ecNumber>
    </recommendedName>
    <alternativeName>
        <fullName>Proteinase E</fullName>
    </alternativeName>
</protein>
<name>VM1_CROMN</name>
<organism>
    <name type="scientific">Crotalus molossus nigrescens</name>
    <name type="common">Black-tailed rattlesnake</name>
    <dbReference type="NCBI Taxonomy" id="8734"/>
    <lineage>
        <taxon>Eukaryota</taxon>
        <taxon>Metazoa</taxon>
        <taxon>Chordata</taxon>
        <taxon>Craniata</taxon>
        <taxon>Vertebrata</taxon>
        <taxon>Euteleostomi</taxon>
        <taxon>Lepidosauria</taxon>
        <taxon>Squamata</taxon>
        <taxon>Bifurcata</taxon>
        <taxon>Unidentata</taxon>
        <taxon>Episquamata</taxon>
        <taxon>Toxicofera</taxon>
        <taxon>Serpentes</taxon>
        <taxon>Colubroidea</taxon>
        <taxon>Viperidae</taxon>
        <taxon>Crotalinae</taxon>
        <taxon>Crotalus</taxon>
    </lineage>
</organism>
<reference key="1">
    <citation type="journal article" date="1990" name="Toxicon">
        <title>Characterization of the venom from Crotalus molossus nigrescens Gloyd (black tail rattlesnake): isolation of two proteases.</title>
        <authorList>
            <person name="Ramirez G.A."/>
            <person name="Fletcher P.L. Jr."/>
            <person name="Possani L.D."/>
        </authorList>
    </citation>
    <scope>PROTEIN SEQUENCE</scope>
    <source>
        <tissue>Venom</tissue>
    </source>
</reference>
<proteinExistence type="evidence at protein level"/>
<feature type="chain" id="PRO_0000408032" description="Snake venom metalloproteinase">
    <location>
        <begin position="1" status="less than"/>
        <end position="12" status="greater than"/>
    </location>
</feature>
<feature type="domain" description="Peptidase M12B" evidence="2">
    <location>
        <begin position="4"/>
        <end position="12" status="greater than"/>
    </location>
</feature>
<feature type="binding site" evidence="1">
    <location>
        <position position="7"/>
    </location>
    <ligand>
        <name>Ca(2+)</name>
        <dbReference type="ChEBI" id="CHEBI:29108"/>
    </ligand>
</feature>
<feature type="unsure residue" description="E or Q">
    <location>
        <position position="7"/>
    </location>
</feature>
<feature type="non-terminal residue">
    <location>
        <position position="1"/>
    </location>
</feature>
<feature type="non-terminal residue">
    <location>
        <position position="12"/>
    </location>
</feature>